<organism>
    <name type="scientific">Homo sapiens</name>
    <name type="common">Human</name>
    <dbReference type="NCBI Taxonomy" id="9606"/>
    <lineage>
        <taxon>Eukaryota</taxon>
        <taxon>Metazoa</taxon>
        <taxon>Chordata</taxon>
        <taxon>Craniata</taxon>
        <taxon>Vertebrata</taxon>
        <taxon>Euteleostomi</taxon>
        <taxon>Mammalia</taxon>
        <taxon>Eutheria</taxon>
        <taxon>Euarchontoglires</taxon>
        <taxon>Primates</taxon>
        <taxon>Haplorrhini</taxon>
        <taxon>Catarrhini</taxon>
        <taxon>Hominidae</taxon>
        <taxon>Homo</taxon>
    </lineage>
</organism>
<accession>P51504</accession>
<accession>Q6NSW4</accession>
<accession>Q6NT14</accession>
<feature type="chain" id="PRO_0000047391" description="Zinc finger protein 80">
    <location>
        <begin position="1"/>
        <end position="273"/>
    </location>
</feature>
<feature type="zinc finger region" description="C2H2-type 1" evidence="1">
    <location>
        <begin position="49"/>
        <end position="71"/>
    </location>
</feature>
<feature type="zinc finger region" description="C2H2-type 2" evidence="1">
    <location>
        <begin position="77"/>
        <end position="99"/>
    </location>
</feature>
<feature type="zinc finger region" description="C2H2-type 3; atypical" evidence="1">
    <location>
        <begin position="105"/>
        <end position="127"/>
    </location>
</feature>
<feature type="zinc finger region" description="C2H2-type 4" evidence="1">
    <location>
        <begin position="133"/>
        <end position="155"/>
    </location>
</feature>
<feature type="zinc finger region" description="C2H2-type 5" evidence="1">
    <location>
        <begin position="161"/>
        <end position="183"/>
    </location>
</feature>
<feature type="zinc finger region" description="C2H2-type 6" evidence="1">
    <location>
        <begin position="189"/>
        <end position="211"/>
    </location>
</feature>
<feature type="zinc finger region" description="C2H2-type 7" evidence="1">
    <location>
        <begin position="217"/>
        <end position="239"/>
    </location>
</feature>
<feature type="sequence variant" id="VAR_046561" description="In dbSNP:rs6438191.">
    <original>R</original>
    <variation>H</variation>
    <location>
        <position position="201"/>
    </location>
</feature>
<feature type="sequence variant" id="VAR_019972" description="In dbSNP:rs3732782.">
    <original>D</original>
    <variation>A</variation>
    <location>
        <position position="253"/>
    </location>
</feature>
<feature type="sequence conflict" description="In Ref. 1; CAA46340." evidence="2" ref="1">
    <original>P</original>
    <variation>H</variation>
    <location>
        <position position="95"/>
    </location>
</feature>
<evidence type="ECO:0000255" key="1">
    <source>
        <dbReference type="PROSITE-ProRule" id="PRU00042"/>
    </source>
</evidence>
<evidence type="ECO:0000305" key="2"/>
<keyword id="KW-0238">DNA-binding</keyword>
<keyword id="KW-0479">Metal-binding</keyword>
<keyword id="KW-0539">Nucleus</keyword>
<keyword id="KW-1185">Reference proteome</keyword>
<keyword id="KW-0677">Repeat</keyword>
<keyword id="KW-0804">Transcription</keyword>
<keyword id="KW-0805">Transcription regulation</keyword>
<keyword id="KW-0862">Zinc</keyword>
<keyword id="KW-0863">Zinc-finger</keyword>
<protein>
    <recommendedName>
        <fullName>Zinc finger protein 80</fullName>
    </recommendedName>
    <alternativeName>
        <fullName>ZNFpT17</fullName>
    </alternativeName>
</protein>
<sequence>MSPKRDGLGTGDGLHSQVLQEQVSTGDNLHECDSQGPSKDTLVREGKTYKCKECGSVFNKNSLLVRHQQIHTGVKPYECQECGKAFPEKVDFVRPMRIHTGEKPCKCVECGKVFNRRSHLLCYRQIHTGEKPYECSECGKTFSYHSVFIQHRVTHTGEKLFGCKECGKTFYYNSSLTRHMKIHTGEKPCKCSECGKTFTYRSVFFRHSMTHTAGKPYECKECGKGFYYSYSLTRHTRSHTGEKPYECLEHRKDFGYHSAFAQQSKIHSGGKNL</sequence>
<comment type="function">
    <text>May be involved in transcriptional regulation.</text>
</comment>
<comment type="interaction">
    <interactant intactId="EBI-12013828">
        <id>P51504</id>
    </interactant>
    <interactant intactId="EBI-739580">
        <id>Q13137</id>
        <label>CALCOCO2</label>
    </interactant>
    <organismsDiffer>false</organismsDiffer>
    <experiments>3</experiments>
</comment>
<comment type="interaction">
    <interactant intactId="EBI-12013828">
        <id>P51504</id>
    </interactant>
    <interactant intactId="EBI-3866279">
        <id>Q9BWT7</id>
        <label>CARD10</label>
    </interactant>
    <organismsDiffer>false</organismsDiffer>
    <experiments>3</experiments>
</comment>
<comment type="interaction">
    <interactant intactId="EBI-12013828">
        <id>P51504</id>
    </interactant>
    <interactant intactId="EBI-11063830">
        <id>Q86X02</id>
        <label>CDR2L</label>
    </interactant>
    <organismsDiffer>false</organismsDiffer>
    <experiments>3</experiments>
</comment>
<comment type="interaction">
    <interactant intactId="EBI-12013828">
        <id>P51504</id>
    </interactant>
    <interactant intactId="EBI-5916454">
        <id>A6NEM1</id>
        <label>GOLGA6L9</label>
    </interactant>
    <organismsDiffer>false</organismsDiffer>
    <experiments>3</experiments>
</comment>
<comment type="interaction">
    <interactant intactId="EBI-12013828">
        <id>P51504</id>
    </interactant>
    <interactant intactId="EBI-746704">
        <id>Q9UJC3</id>
        <label>HOOK1</label>
    </interactant>
    <organismsDiffer>false</organismsDiffer>
    <experiments>3</experiments>
</comment>
<comment type="interaction">
    <interactant intactId="EBI-12013828">
        <id>P51504</id>
    </interactant>
    <interactant intactId="EBI-3044087">
        <id>Q7Z3Y8</id>
        <label>KRT27</label>
    </interactant>
    <organismsDiffer>false</organismsDiffer>
    <experiments>3</experiments>
</comment>
<comment type="interaction">
    <interactant intactId="EBI-12013828">
        <id>P51504</id>
    </interactant>
    <interactant intactId="EBI-10172052">
        <id>P60411</id>
        <label>KRTAP10-9</label>
    </interactant>
    <organismsDiffer>false</organismsDiffer>
    <experiments>3</experiments>
</comment>
<comment type="interaction">
    <interactant intactId="EBI-12013828">
        <id>P51504</id>
    </interactant>
    <interactant intactId="EBI-11953334">
        <id>P60328</id>
        <label>KRTAP12-3</label>
    </interactant>
    <organismsDiffer>false</organismsDiffer>
    <experiments>3</experiments>
</comment>
<comment type="interaction">
    <interactant intactId="EBI-12013828">
        <id>P51504</id>
    </interactant>
    <interactant intactId="EBI-2803134">
        <id>Q2NL98</id>
        <label>VMAC</label>
    </interactant>
    <organismsDiffer>false</organismsDiffer>
    <experiments>3</experiments>
</comment>
<comment type="subcellular location">
    <subcellularLocation>
        <location evidence="2">Nucleus</location>
    </subcellularLocation>
</comment>
<comment type="similarity">
    <text evidence="2">Belongs to the krueppel C2H2-type zinc-finger protein family.</text>
</comment>
<gene>
    <name type="primary">ZNF80</name>
</gene>
<reference key="1">
    <citation type="journal article" date="1993" name="Hum. Genet.">
        <title>Chromosomal localization of four human zinc finger cDNAs.</title>
        <authorList>
            <person name="Huebner K."/>
            <person name="Druck T."/>
            <person name="LaForgia S."/>
            <person name="Lasota J."/>
            <person name="Croce C.M."/>
            <person name="Lanfrancone L."/>
            <person name="Donti E."/>
            <person name="Pengue G."/>
            <person name="la Mantia G."/>
            <person name="Pelicci P.-G."/>
            <person name="Lania L."/>
        </authorList>
    </citation>
    <scope>NUCLEOTIDE SEQUENCE [MRNA]</scope>
</reference>
<reference key="2">
    <citation type="journal article" date="1995" name="Nucleic Acids Res.">
        <title>Characterization and genomic mapping of the ZNF80 locus: expression of this zinc-finger gene is driven by a solitary LTR of ERV9 endogenous retroviral family.</title>
        <authorList>
            <person name="di Cristofano A."/>
            <person name="Strazzullo M."/>
            <person name="Longo L."/>
            <person name="la Mantia G."/>
        </authorList>
    </citation>
    <scope>NUCLEOTIDE SEQUENCE [MRNA]</scope>
</reference>
<reference key="3">
    <citation type="submission" date="2005-09" db="EMBL/GenBank/DDBJ databases">
        <authorList>
            <person name="Mural R.J."/>
            <person name="Istrail S."/>
            <person name="Sutton G.G."/>
            <person name="Florea L."/>
            <person name="Halpern A.L."/>
            <person name="Mobarry C.M."/>
            <person name="Lippert R."/>
            <person name="Walenz B."/>
            <person name="Shatkay H."/>
            <person name="Dew I."/>
            <person name="Miller J.R."/>
            <person name="Flanigan M.J."/>
            <person name="Edwards N.J."/>
            <person name="Bolanos R."/>
            <person name="Fasulo D."/>
            <person name="Halldorsson B.V."/>
            <person name="Hannenhalli S."/>
            <person name="Turner R."/>
            <person name="Yooseph S."/>
            <person name="Lu F."/>
            <person name="Nusskern D.R."/>
            <person name="Shue B.C."/>
            <person name="Zheng X.H."/>
            <person name="Zhong F."/>
            <person name="Delcher A.L."/>
            <person name="Huson D.H."/>
            <person name="Kravitz S.A."/>
            <person name="Mouchard L."/>
            <person name="Reinert K."/>
            <person name="Remington K.A."/>
            <person name="Clark A.G."/>
            <person name="Waterman M.S."/>
            <person name="Eichler E.E."/>
            <person name="Adams M.D."/>
            <person name="Hunkapiller M.W."/>
            <person name="Myers E.W."/>
            <person name="Venter J.C."/>
        </authorList>
    </citation>
    <scope>NUCLEOTIDE SEQUENCE [LARGE SCALE GENOMIC DNA]</scope>
</reference>
<reference key="4">
    <citation type="journal article" date="2004" name="Genome Res.">
        <title>The status, quality, and expansion of the NIH full-length cDNA project: the Mammalian Gene Collection (MGC).</title>
        <authorList>
            <consortium name="The MGC Project Team"/>
        </authorList>
    </citation>
    <scope>NUCLEOTIDE SEQUENCE [LARGE SCALE MRNA]</scope>
</reference>
<proteinExistence type="evidence at protein level"/>
<name>ZNF80_HUMAN</name>
<dbReference type="EMBL" id="X65233">
    <property type="protein sequence ID" value="CAA46340.1"/>
    <property type="molecule type" value="mRNA"/>
</dbReference>
<dbReference type="EMBL" id="CH471052">
    <property type="protein sequence ID" value="EAW79603.1"/>
    <property type="molecule type" value="Genomic_DNA"/>
</dbReference>
<dbReference type="EMBL" id="BC069606">
    <property type="protein sequence ID" value="AAH69606.2"/>
    <property type="molecule type" value="mRNA"/>
</dbReference>
<dbReference type="EMBL" id="BC069826">
    <property type="protein sequence ID" value="AAH69826.2"/>
    <property type="molecule type" value="mRNA"/>
</dbReference>
<dbReference type="EMBL" id="BC129925">
    <property type="protein sequence ID" value="AAI29926.1"/>
    <property type="molecule type" value="mRNA"/>
</dbReference>
<dbReference type="CCDS" id="CCDS2979.1"/>
<dbReference type="RefSeq" id="NP_009067.2">
    <property type="nucleotide sequence ID" value="NM_007136.4"/>
</dbReference>
<dbReference type="RefSeq" id="XP_016862621.1">
    <property type="nucleotide sequence ID" value="XM_017007132.1"/>
</dbReference>
<dbReference type="RefSeq" id="XP_016862622.1">
    <property type="nucleotide sequence ID" value="XM_017007133.1"/>
</dbReference>
<dbReference type="RefSeq" id="XP_016862623.1">
    <property type="nucleotide sequence ID" value="XM_017007134.1"/>
</dbReference>
<dbReference type="RefSeq" id="XP_016862624.1">
    <property type="nucleotide sequence ID" value="XM_017007135.1"/>
</dbReference>
<dbReference type="RefSeq" id="XP_016862625.1">
    <property type="nucleotide sequence ID" value="XM_017007136.1"/>
</dbReference>
<dbReference type="SMR" id="P51504"/>
<dbReference type="BioGRID" id="113452">
    <property type="interactions" value="10"/>
</dbReference>
<dbReference type="FunCoup" id="P51504">
    <property type="interactions" value="4"/>
</dbReference>
<dbReference type="IntAct" id="P51504">
    <property type="interactions" value="9"/>
</dbReference>
<dbReference type="STRING" id="9606.ENSP00000417192"/>
<dbReference type="GlyGen" id="P51504">
    <property type="glycosylation" value="1 site, 1 O-linked glycan (1 site)"/>
</dbReference>
<dbReference type="iPTMnet" id="P51504"/>
<dbReference type="PhosphoSitePlus" id="P51504"/>
<dbReference type="BioMuta" id="ZNF80"/>
<dbReference type="DMDM" id="206729946"/>
<dbReference type="jPOST" id="P51504"/>
<dbReference type="MassIVE" id="P51504"/>
<dbReference type="PaxDb" id="9606-ENSP00000417192"/>
<dbReference type="PeptideAtlas" id="P51504"/>
<dbReference type="ProteomicsDB" id="56310"/>
<dbReference type="Antibodypedia" id="32644">
    <property type="antibodies" value="22 antibodies from 11 providers"/>
</dbReference>
<dbReference type="DNASU" id="7634"/>
<dbReference type="Ensembl" id="ENST00000308095.4">
    <property type="protein sequence ID" value="ENSP00000309812.4"/>
    <property type="gene ID" value="ENSG00000174255.8"/>
</dbReference>
<dbReference type="Ensembl" id="ENST00000482457.4">
    <property type="protein sequence ID" value="ENSP00000417192.3"/>
    <property type="gene ID" value="ENSG00000174255.8"/>
</dbReference>
<dbReference type="GeneID" id="7634"/>
<dbReference type="KEGG" id="hsa:7634"/>
<dbReference type="MANE-Select" id="ENST00000482457.4">
    <property type="protein sequence ID" value="ENSP00000417192.3"/>
    <property type="RefSeq nucleotide sequence ID" value="NM_007136.4"/>
    <property type="RefSeq protein sequence ID" value="NP_009067.2"/>
</dbReference>
<dbReference type="UCSC" id="uc010hqo.5">
    <property type="organism name" value="human"/>
</dbReference>
<dbReference type="AGR" id="HGNC:13155"/>
<dbReference type="CTD" id="7634"/>
<dbReference type="DisGeNET" id="7634"/>
<dbReference type="GeneCards" id="ZNF80"/>
<dbReference type="HGNC" id="HGNC:13155">
    <property type="gene designation" value="ZNF80"/>
</dbReference>
<dbReference type="HPA" id="ENSG00000174255">
    <property type="expression patterns" value="Tissue enriched (lymphoid)"/>
</dbReference>
<dbReference type="MIM" id="194553">
    <property type="type" value="gene"/>
</dbReference>
<dbReference type="neXtProt" id="NX_P51504"/>
<dbReference type="OpenTargets" id="ENSG00000174255"/>
<dbReference type="PharmGKB" id="PA37729"/>
<dbReference type="VEuPathDB" id="HostDB:ENSG00000174255"/>
<dbReference type="eggNOG" id="KOG1721">
    <property type="taxonomic scope" value="Eukaryota"/>
</dbReference>
<dbReference type="GeneTree" id="ENSGT00940000164925"/>
<dbReference type="HOGENOM" id="CLU_002678_2_1_1"/>
<dbReference type="InParanoid" id="P51504"/>
<dbReference type="OMA" id="YHSVFFR"/>
<dbReference type="OrthoDB" id="9622403at2759"/>
<dbReference type="PAN-GO" id="P51504">
    <property type="GO annotations" value="3 GO annotations based on evolutionary models"/>
</dbReference>
<dbReference type="PhylomeDB" id="P51504"/>
<dbReference type="TreeFam" id="TF337055"/>
<dbReference type="PathwayCommons" id="P51504"/>
<dbReference type="SignaLink" id="P51504"/>
<dbReference type="BioGRID-ORCS" id="7634">
    <property type="hits" value="14 hits in 1173 CRISPR screens"/>
</dbReference>
<dbReference type="GenomeRNAi" id="7634"/>
<dbReference type="Pharos" id="P51504">
    <property type="development level" value="Tdark"/>
</dbReference>
<dbReference type="PRO" id="PR:P51504"/>
<dbReference type="Proteomes" id="UP000005640">
    <property type="component" value="Chromosome 3"/>
</dbReference>
<dbReference type="RNAct" id="P51504">
    <property type="molecule type" value="protein"/>
</dbReference>
<dbReference type="Bgee" id="ENSG00000174255">
    <property type="expression patterns" value="Expressed in granulocyte and 53 other cell types or tissues"/>
</dbReference>
<dbReference type="GO" id="GO:0005634">
    <property type="term" value="C:nucleus"/>
    <property type="evidence" value="ECO:0000318"/>
    <property type="project" value="GO_Central"/>
</dbReference>
<dbReference type="GO" id="GO:0000981">
    <property type="term" value="F:DNA-binding transcription factor activity, RNA polymerase II-specific"/>
    <property type="evidence" value="ECO:0000318"/>
    <property type="project" value="GO_Central"/>
</dbReference>
<dbReference type="GO" id="GO:0000977">
    <property type="term" value="F:RNA polymerase II transcription regulatory region sequence-specific DNA binding"/>
    <property type="evidence" value="ECO:0000318"/>
    <property type="project" value="GO_Central"/>
</dbReference>
<dbReference type="GO" id="GO:0008270">
    <property type="term" value="F:zinc ion binding"/>
    <property type="evidence" value="ECO:0007669"/>
    <property type="project" value="UniProtKB-KW"/>
</dbReference>
<dbReference type="GO" id="GO:0006357">
    <property type="term" value="P:regulation of transcription by RNA polymerase II"/>
    <property type="evidence" value="ECO:0000318"/>
    <property type="project" value="GO_Central"/>
</dbReference>
<dbReference type="FunFam" id="3.30.160.60:FF:000295">
    <property type="entry name" value="zinc finger protein 19"/>
    <property type="match status" value="1"/>
</dbReference>
<dbReference type="FunFam" id="3.30.160.60:FF:002341">
    <property type="entry name" value="Zinc finger protein 80"/>
    <property type="match status" value="1"/>
</dbReference>
<dbReference type="FunFam" id="3.30.160.60:FF:002593">
    <property type="entry name" value="Zinc finger protein 80"/>
    <property type="match status" value="1"/>
</dbReference>
<dbReference type="FunFam" id="3.30.160.60:FF:000896">
    <property type="entry name" value="Zinc finger protein 805"/>
    <property type="match status" value="1"/>
</dbReference>
<dbReference type="FunFam" id="3.30.160.60:FF:000275">
    <property type="entry name" value="zinc finger protein 90 homolog"/>
    <property type="match status" value="1"/>
</dbReference>
<dbReference type="FunFam" id="3.30.160.60:FF:001111">
    <property type="entry name" value="Zinc finger protein 92 homolog"/>
    <property type="match status" value="1"/>
</dbReference>
<dbReference type="FunFam" id="3.30.160.60:FF:000110">
    <property type="entry name" value="Zinc finger protein-like"/>
    <property type="match status" value="1"/>
</dbReference>
<dbReference type="Gene3D" id="3.30.160.60">
    <property type="entry name" value="Classic Zinc Finger"/>
    <property type="match status" value="8"/>
</dbReference>
<dbReference type="InterPro" id="IPR036236">
    <property type="entry name" value="Znf_C2H2_sf"/>
</dbReference>
<dbReference type="InterPro" id="IPR013087">
    <property type="entry name" value="Znf_C2H2_type"/>
</dbReference>
<dbReference type="PANTHER" id="PTHR24399:SF54">
    <property type="entry name" value="GASTRULA ZINC FINGER PROTEIN XLCGF26.1-LIKE-RELATED"/>
    <property type="match status" value="1"/>
</dbReference>
<dbReference type="PANTHER" id="PTHR24399">
    <property type="entry name" value="ZINC FINGER AND BTB DOMAIN-CONTAINING"/>
    <property type="match status" value="1"/>
</dbReference>
<dbReference type="Pfam" id="PF00096">
    <property type="entry name" value="zf-C2H2"/>
    <property type="match status" value="5"/>
</dbReference>
<dbReference type="SMART" id="SM00355">
    <property type="entry name" value="ZnF_C2H2"/>
    <property type="match status" value="7"/>
</dbReference>
<dbReference type="SUPFAM" id="SSF57667">
    <property type="entry name" value="beta-beta-alpha zinc fingers"/>
    <property type="match status" value="4"/>
</dbReference>
<dbReference type="PROSITE" id="PS00028">
    <property type="entry name" value="ZINC_FINGER_C2H2_1"/>
    <property type="match status" value="5"/>
</dbReference>
<dbReference type="PROSITE" id="PS50157">
    <property type="entry name" value="ZINC_FINGER_C2H2_2"/>
    <property type="match status" value="7"/>
</dbReference>